<comment type="function">
    <text evidence="4">Recombinant C-type lectin BML-2 is able to agglutinate erythrocytes. May be a calcium-dependent lectin.</text>
</comment>
<comment type="subunit">
    <text evidence="4">Dimer. Probably non-covalently linked.</text>
</comment>
<comment type="subcellular location">
    <subcellularLocation>
        <location>Secreted</location>
    </subcellularLocation>
</comment>
<comment type="tissue specificity">
    <text>Expressed by the venom gland.</text>
</comment>
<comment type="similarity">
    <text evidence="5">Belongs to the true venom lectin family.</text>
</comment>
<proteinExistence type="evidence at protein level"/>
<organism>
    <name type="scientific">Bungarus multicinctus</name>
    <name type="common">Many-banded krait</name>
    <dbReference type="NCBI Taxonomy" id="8616"/>
    <lineage>
        <taxon>Eukaryota</taxon>
        <taxon>Metazoa</taxon>
        <taxon>Chordata</taxon>
        <taxon>Craniata</taxon>
        <taxon>Vertebrata</taxon>
        <taxon>Euteleostomi</taxon>
        <taxon>Lepidosauria</taxon>
        <taxon>Squamata</taxon>
        <taxon>Bifurcata</taxon>
        <taxon>Unidentata</taxon>
        <taxon>Episquamata</taxon>
        <taxon>Toxicofera</taxon>
        <taxon>Serpentes</taxon>
        <taxon>Colubroidea</taxon>
        <taxon>Elapidae</taxon>
        <taxon>Bungarinae</taxon>
        <taxon>Bungarus</taxon>
    </lineage>
</organism>
<name>LECM2_BUNMU</name>
<protein>
    <recommendedName>
        <fullName>C-type lectin BML-2</fullName>
        <shortName>CTL</shortName>
    </recommendedName>
</protein>
<reference key="1">
    <citation type="journal article" date="2007" name="Toxicon">
        <title>Cloning, expression and characterization of two C-type lectins from the venom gland of Bungarus multicinctus.</title>
        <authorList>
            <person name="Lin L.-P."/>
            <person name="Lin Q."/>
            <person name="Wang Y.-Q."/>
        </authorList>
    </citation>
    <scope>NUCLEOTIDE SEQUENCE [MRNA]</scope>
    <scope>FUNCTION</scope>
    <scope>SUBUNIT</scope>
    <source>
        <tissue>Venom</tissue>
        <tissue>Venom gland</tissue>
    </source>
</reference>
<dbReference type="EMBL" id="DQ787090">
    <property type="protein sequence ID" value="ABH05181.1"/>
    <property type="molecule type" value="mRNA"/>
</dbReference>
<dbReference type="SMR" id="A1XXJ9"/>
<dbReference type="GO" id="GO:0005576">
    <property type="term" value="C:extracellular region"/>
    <property type="evidence" value="ECO:0007669"/>
    <property type="project" value="UniProtKB-SubCell"/>
</dbReference>
<dbReference type="GO" id="GO:0030246">
    <property type="term" value="F:carbohydrate binding"/>
    <property type="evidence" value="ECO:0007669"/>
    <property type="project" value="UniProtKB-KW"/>
</dbReference>
<dbReference type="GO" id="GO:0046872">
    <property type="term" value="F:metal ion binding"/>
    <property type="evidence" value="ECO:0007669"/>
    <property type="project" value="UniProtKB-KW"/>
</dbReference>
<dbReference type="CDD" id="cd03594">
    <property type="entry name" value="CLECT_REG-1_like"/>
    <property type="match status" value="1"/>
</dbReference>
<dbReference type="FunFam" id="3.10.100.10:FF:000015">
    <property type="entry name" value="C-type lectin Cal"/>
    <property type="match status" value="1"/>
</dbReference>
<dbReference type="Gene3D" id="3.10.100.10">
    <property type="entry name" value="Mannose-Binding Protein A, subunit A"/>
    <property type="match status" value="1"/>
</dbReference>
<dbReference type="InterPro" id="IPR001304">
    <property type="entry name" value="C-type_lectin-like"/>
</dbReference>
<dbReference type="InterPro" id="IPR016186">
    <property type="entry name" value="C-type_lectin-like/link_sf"/>
</dbReference>
<dbReference type="InterPro" id="IPR050111">
    <property type="entry name" value="C-type_lectin/snaclec_domain"/>
</dbReference>
<dbReference type="InterPro" id="IPR018378">
    <property type="entry name" value="C-type_lectin_CS"/>
</dbReference>
<dbReference type="InterPro" id="IPR016187">
    <property type="entry name" value="CTDL_fold"/>
</dbReference>
<dbReference type="PANTHER" id="PTHR22803">
    <property type="entry name" value="MANNOSE, PHOSPHOLIPASE, LECTIN RECEPTOR RELATED"/>
    <property type="match status" value="1"/>
</dbReference>
<dbReference type="Pfam" id="PF00059">
    <property type="entry name" value="Lectin_C"/>
    <property type="match status" value="1"/>
</dbReference>
<dbReference type="PRINTS" id="PR01504">
    <property type="entry name" value="PNCREATITSAP"/>
</dbReference>
<dbReference type="SMART" id="SM00034">
    <property type="entry name" value="CLECT"/>
    <property type="match status" value="1"/>
</dbReference>
<dbReference type="SUPFAM" id="SSF56436">
    <property type="entry name" value="C-type lectin-like"/>
    <property type="match status" value="1"/>
</dbReference>
<dbReference type="PROSITE" id="PS00615">
    <property type="entry name" value="C_TYPE_LECTIN_1"/>
    <property type="match status" value="1"/>
</dbReference>
<dbReference type="PROSITE" id="PS50041">
    <property type="entry name" value="C_TYPE_LECTIN_2"/>
    <property type="match status" value="1"/>
</dbReference>
<evidence type="ECO:0000250" key="1"/>
<evidence type="ECO:0000255" key="2"/>
<evidence type="ECO:0000255" key="3">
    <source>
        <dbReference type="PROSITE-ProRule" id="PRU00040"/>
    </source>
</evidence>
<evidence type="ECO:0000269" key="4">
    <source>
    </source>
</evidence>
<evidence type="ECO:0000305" key="5"/>
<keyword id="KW-0106">Calcium</keyword>
<keyword id="KW-1015">Disulfide bond</keyword>
<keyword id="KW-0325">Glycoprotein</keyword>
<keyword id="KW-0348">Hemagglutinin</keyword>
<keyword id="KW-0430">Lectin</keyword>
<keyword id="KW-0479">Metal-binding</keyword>
<keyword id="KW-0964">Secreted</keyword>
<keyword id="KW-0732">Signal</keyword>
<feature type="signal peptide" evidence="2">
    <location>
        <begin position="1"/>
        <end position="23"/>
    </location>
</feature>
<feature type="chain" id="PRO_0000355261" description="C-type lectin BML-2">
    <location>
        <begin position="24"/>
        <end position="158"/>
    </location>
</feature>
<feature type="domain" description="C-type lectin" evidence="3">
    <location>
        <begin position="33"/>
        <end position="155"/>
    </location>
</feature>
<feature type="short sequence motif" description="Mannose-binding">
    <location>
        <begin position="119"/>
        <end position="121"/>
    </location>
</feature>
<feature type="binding site" evidence="1">
    <location>
        <position position="127"/>
    </location>
    <ligand>
        <name>Ca(2+)</name>
        <dbReference type="ChEBI" id="CHEBI:29108"/>
    </ligand>
</feature>
<feature type="binding site" evidence="1">
    <location>
        <position position="142"/>
    </location>
    <ligand>
        <name>Ca(2+)</name>
        <dbReference type="ChEBI" id="CHEBI:29108"/>
    </ligand>
</feature>
<feature type="binding site" evidence="1">
    <location>
        <position position="143"/>
    </location>
    <ligand>
        <name>Ca(2+)</name>
        <dbReference type="ChEBI" id="CHEBI:29108"/>
    </ligand>
</feature>
<feature type="glycosylation site" description="N-linked (GlcNAc...) asparagine" evidence="2">
    <location>
        <position position="121"/>
    </location>
</feature>
<feature type="disulfide bond" evidence="3">
    <location>
        <begin position="26"/>
        <end position="37"/>
    </location>
</feature>
<feature type="disulfide bond" evidence="3">
    <location>
        <begin position="54"/>
        <end position="154"/>
    </location>
</feature>
<feature type="disulfide bond" evidence="3">
    <location>
        <begin position="61"/>
        <end position="156"/>
    </location>
</feature>
<feature type="disulfide bond" evidence="3">
    <location>
        <begin position="129"/>
        <end position="146"/>
    </location>
</feature>
<accession>A1XXJ9</accession>
<sequence>MGHFTFTGLCLLAMFLSLRGAECYTCPIDWLPKNGLCYKVFSNPNTWLDAELFCRKFKPGCRLASLHRDADSADLAEYISDYLKVDGSVWIGLNDPQKKRTWVWSDRSSSNYFSWNQGEPNNSKNKEYCVHLWAPTGYLKWNDAPCESLHPFLCQCKY</sequence>